<protein>
    <recommendedName>
        <fullName evidence="1">Glycine--tRNA ligase beta subunit</fullName>
        <ecNumber evidence="1">6.1.1.14</ecNumber>
    </recommendedName>
    <alternativeName>
        <fullName evidence="1">Glycyl-tRNA synthetase beta subunit</fullName>
        <shortName evidence="1">GlyRS</shortName>
    </alternativeName>
</protein>
<dbReference type="EC" id="6.1.1.14" evidence="1"/>
<dbReference type="EMBL" id="AE014133">
    <property type="protein sequence ID" value="AAN58196.1"/>
    <property type="molecule type" value="Genomic_DNA"/>
</dbReference>
<dbReference type="RefSeq" id="NP_720890.1">
    <property type="nucleotide sequence ID" value="NC_004350.2"/>
</dbReference>
<dbReference type="RefSeq" id="WP_002262082.1">
    <property type="nucleotide sequence ID" value="NC_004350.2"/>
</dbReference>
<dbReference type="SMR" id="Q8CWY5"/>
<dbReference type="STRING" id="210007.SMU_446"/>
<dbReference type="GeneID" id="93859982"/>
<dbReference type="KEGG" id="smu:SMU_446"/>
<dbReference type="PATRIC" id="fig|210007.7.peg.392"/>
<dbReference type="eggNOG" id="COG0751">
    <property type="taxonomic scope" value="Bacteria"/>
</dbReference>
<dbReference type="HOGENOM" id="CLU_007220_2_2_9"/>
<dbReference type="OrthoDB" id="9775440at2"/>
<dbReference type="PhylomeDB" id="Q8CWY5"/>
<dbReference type="Proteomes" id="UP000002512">
    <property type="component" value="Chromosome"/>
</dbReference>
<dbReference type="GO" id="GO:0005829">
    <property type="term" value="C:cytosol"/>
    <property type="evidence" value="ECO:0007669"/>
    <property type="project" value="TreeGrafter"/>
</dbReference>
<dbReference type="GO" id="GO:0004814">
    <property type="term" value="F:arginine-tRNA ligase activity"/>
    <property type="evidence" value="ECO:0007669"/>
    <property type="project" value="InterPro"/>
</dbReference>
<dbReference type="GO" id="GO:0005524">
    <property type="term" value="F:ATP binding"/>
    <property type="evidence" value="ECO:0007669"/>
    <property type="project" value="UniProtKB-UniRule"/>
</dbReference>
<dbReference type="GO" id="GO:0004820">
    <property type="term" value="F:glycine-tRNA ligase activity"/>
    <property type="evidence" value="ECO:0007669"/>
    <property type="project" value="UniProtKB-UniRule"/>
</dbReference>
<dbReference type="GO" id="GO:0006420">
    <property type="term" value="P:arginyl-tRNA aminoacylation"/>
    <property type="evidence" value="ECO:0007669"/>
    <property type="project" value="InterPro"/>
</dbReference>
<dbReference type="GO" id="GO:0006426">
    <property type="term" value="P:glycyl-tRNA aminoacylation"/>
    <property type="evidence" value="ECO:0007669"/>
    <property type="project" value="UniProtKB-UniRule"/>
</dbReference>
<dbReference type="HAMAP" id="MF_00255">
    <property type="entry name" value="Gly_tRNA_synth_beta"/>
    <property type="match status" value="1"/>
</dbReference>
<dbReference type="InterPro" id="IPR008909">
    <property type="entry name" value="DALR_anticod-bd"/>
</dbReference>
<dbReference type="InterPro" id="IPR015944">
    <property type="entry name" value="Gly-tRNA-synth_bsu"/>
</dbReference>
<dbReference type="InterPro" id="IPR006194">
    <property type="entry name" value="Gly-tRNA-synth_heterodimer"/>
</dbReference>
<dbReference type="NCBIfam" id="TIGR00211">
    <property type="entry name" value="glyS"/>
    <property type="match status" value="1"/>
</dbReference>
<dbReference type="PANTHER" id="PTHR30075:SF2">
    <property type="entry name" value="GLYCINE--TRNA LIGASE, CHLOROPLASTIC_MITOCHONDRIAL 2"/>
    <property type="match status" value="1"/>
</dbReference>
<dbReference type="PANTHER" id="PTHR30075">
    <property type="entry name" value="GLYCYL-TRNA SYNTHETASE"/>
    <property type="match status" value="1"/>
</dbReference>
<dbReference type="Pfam" id="PF05746">
    <property type="entry name" value="DALR_1"/>
    <property type="match status" value="1"/>
</dbReference>
<dbReference type="Pfam" id="PF02092">
    <property type="entry name" value="tRNA_synt_2f"/>
    <property type="match status" value="1"/>
</dbReference>
<dbReference type="PRINTS" id="PR01045">
    <property type="entry name" value="TRNASYNTHGB"/>
</dbReference>
<dbReference type="SUPFAM" id="SSF109604">
    <property type="entry name" value="HD-domain/PDEase-like"/>
    <property type="match status" value="1"/>
</dbReference>
<dbReference type="PROSITE" id="PS50861">
    <property type="entry name" value="AA_TRNA_LIGASE_II_GLYAB"/>
    <property type="match status" value="1"/>
</dbReference>
<reference key="1">
    <citation type="journal article" date="2002" name="Proc. Natl. Acad. Sci. U.S.A.">
        <title>Genome sequence of Streptococcus mutans UA159, a cariogenic dental pathogen.</title>
        <authorList>
            <person name="Ajdic D.J."/>
            <person name="McShan W.M."/>
            <person name="McLaughlin R.E."/>
            <person name="Savic G."/>
            <person name="Chang J."/>
            <person name="Carson M.B."/>
            <person name="Primeaux C."/>
            <person name="Tian R."/>
            <person name="Kenton S."/>
            <person name="Jia H.G."/>
            <person name="Lin S.P."/>
            <person name="Qian Y."/>
            <person name="Li S."/>
            <person name="Zhu H."/>
            <person name="Najar F.Z."/>
            <person name="Lai H."/>
            <person name="White J."/>
            <person name="Roe B.A."/>
            <person name="Ferretti J.J."/>
        </authorList>
    </citation>
    <scope>NUCLEOTIDE SEQUENCE [LARGE SCALE GENOMIC DNA]</scope>
    <source>
        <strain>ATCC 700610 / UA159</strain>
    </source>
</reference>
<gene>
    <name evidence="1" type="primary">glyS</name>
    <name type="ordered locus">SMU_446</name>
</gene>
<name>SYGB_STRMU</name>
<evidence type="ECO:0000255" key="1">
    <source>
        <dbReference type="HAMAP-Rule" id="MF_00255"/>
    </source>
</evidence>
<keyword id="KW-0030">Aminoacyl-tRNA synthetase</keyword>
<keyword id="KW-0067">ATP-binding</keyword>
<keyword id="KW-0963">Cytoplasm</keyword>
<keyword id="KW-0436">Ligase</keyword>
<keyword id="KW-0547">Nucleotide-binding</keyword>
<keyword id="KW-0648">Protein biosynthesis</keyword>
<keyword id="KW-1185">Reference proteome</keyword>
<accession>Q8CWY5</accession>
<organism>
    <name type="scientific">Streptococcus mutans serotype c (strain ATCC 700610 / UA159)</name>
    <dbReference type="NCBI Taxonomy" id="210007"/>
    <lineage>
        <taxon>Bacteria</taxon>
        <taxon>Bacillati</taxon>
        <taxon>Bacillota</taxon>
        <taxon>Bacilli</taxon>
        <taxon>Lactobacillales</taxon>
        <taxon>Streptococcaceae</taxon>
        <taxon>Streptococcus</taxon>
    </lineage>
</organism>
<sequence length="679" mass="77121">MTKNLLVELGLEEMPAYVVKPSIKQLRQKMGQFLETNRLSFEKIEMFSTPRRLAIRVVHLADQQSDYSEDFKGPAKKIALDADGHFTKAAQGFVRGKGLTTDAIEFREVKGEEYVYVTKNEAGKPAKEVLGGLIDVLQSLTFPVNMHWANHTFEYIRPVHTLVVLLDDEALDLNFLDIKSGRISRGHRFLGQETQIASAASYETDLRAEFVIADAKEREDMIIEQIREIEKTYNVSVEIDEALLSEVLNLVEYPTAFMGSFDEKYLELPEEVLVTSMKTHQRYFVVRDQTGKLLPNFISVRNGNEQFIENVVKGNEKVLLARLEDGEFFWREDQRLQIADLVEKLKLVTFHEKIGSLYEHMMRTKQIAAYLAEQADLTDQEKAEIERAASIYKFDLLTGMVGEFDELQGIMGEKYATLAGESQAVATAVREHYLPISSDGQLPDSKVGAILAVADKLDTLLSFFSVGLIPSGSNDPYALRRATQGIVRILDKFGWEIPLDRLVANLYQFDFDSLTYQNQADVLAFIRGRVEKMIDKSVPKDIREAVLDSSTHIVRLEVEAAAALAEKADEDHFKASIESLSRVFNLAEKSNHNEMVDTSIFENEYEQELFDAVEELHFTEDMTDNVDRLFVLSPIIDAFFDNTMVMVDDEAVKKNRLNLLDRLAQKANTIAAFNEIRTK</sequence>
<comment type="catalytic activity">
    <reaction evidence="1">
        <text>tRNA(Gly) + glycine + ATP = glycyl-tRNA(Gly) + AMP + diphosphate</text>
        <dbReference type="Rhea" id="RHEA:16013"/>
        <dbReference type="Rhea" id="RHEA-COMP:9664"/>
        <dbReference type="Rhea" id="RHEA-COMP:9683"/>
        <dbReference type="ChEBI" id="CHEBI:30616"/>
        <dbReference type="ChEBI" id="CHEBI:33019"/>
        <dbReference type="ChEBI" id="CHEBI:57305"/>
        <dbReference type="ChEBI" id="CHEBI:78442"/>
        <dbReference type="ChEBI" id="CHEBI:78522"/>
        <dbReference type="ChEBI" id="CHEBI:456215"/>
        <dbReference type="EC" id="6.1.1.14"/>
    </reaction>
</comment>
<comment type="subunit">
    <text evidence="1">Tetramer of two alpha and two beta subunits.</text>
</comment>
<comment type="subcellular location">
    <subcellularLocation>
        <location evidence="1">Cytoplasm</location>
    </subcellularLocation>
</comment>
<comment type="similarity">
    <text evidence="1">Belongs to the class-II aminoacyl-tRNA synthetase family.</text>
</comment>
<proteinExistence type="inferred from homology"/>
<feature type="chain" id="PRO_1000101347" description="Glycine--tRNA ligase beta subunit">
    <location>
        <begin position="1"/>
        <end position="679"/>
    </location>
</feature>